<keyword id="KW-0963">Cytoplasm</keyword>
<keyword id="KW-0216">Detoxification</keyword>
<keyword id="KW-1185">Reference proteome</keyword>
<keyword id="KW-0808">Transferase</keyword>
<sequence length="223" mass="25352">MSYVTDFYQAKLKLYSYWRSSCAHRVRIALTLKGLDYEYIPVNLLKGDQSDSDFKKINPMGTVPALVDGDVVINDSFAIIMYLDDKYPEPPLLPSDYHKRAVNYQATSIVMSGIQPHQNMALFRYLEDKINAEEKTAWITNAITKGFTALEKLLVSCAGKYATGDEVYLADLFLAPQIHAAFNRFHINMEPFPTLARFYESYNELPAFQNAVPEKQPDTPSTI</sequence>
<organism>
    <name type="scientific">Arabidopsis thaliana</name>
    <name type="common">Mouse-ear cress</name>
    <dbReference type="NCBI Taxonomy" id="3702"/>
    <lineage>
        <taxon>Eukaryota</taxon>
        <taxon>Viridiplantae</taxon>
        <taxon>Streptophyta</taxon>
        <taxon>Embryophyta</taxon>
        <taxon>Tracheophyta</taxon>
        <taxon>Spermatophyta</taxon>
        <taxon>Magnoliopsida</taxon>
        <taxon>eudicotyledons</taxon>
        <taxon>Gunneridae</taxon>
        <taxon>Pentapetalae</taxon>
        <taxon>rosids</taxon>
        <taxon>malvids</taxon>
        <taxon>Brassicales</taxon>
        <taxon>Brassicaceae</taxon>
        <taxon>Camelineae</taxon>
        <taxon>Arabidopsis</taxon>
    </lineage>
</organism>
<comment type="function">
    <text evidence="1">May be involved in the conjugation of reduced glutathione to a wide number of exogenous and endogenous hydrophobic electrophiles and have a detoxification role against certain herbicides.</text>
</comment>
<comment type="catalytic activity">
    <reaction>
        <text>RX + glutathione = an S-substituted glutathione + a halide anion + H(+)</text>
        <dbReference type="Rhea" id="RHEA:16437"/>
        <dbReference type="ChEBI" id="CHEBI:15378"/>
        <dbReference type="ChEBI" id="CHEBI:16042"/>
        <dbReference type="ChEBI" id="CHEBI:17792"/>
        <dbReference type="ChEBI" id="CHEBI:57925"/>
        <dbReference type="ChEBI" id="CHEBI:90779"/>
        <dbReference type="EC" id="2.5.1.18"/>
    </reaction>
</comment>
<comment type="subcellular location">
    <subcellularLocation>
        <location evidence="1">Cytoplasm</location>
        <location evidence="1">Cytosol</location>
    </subcellularLocation>
</comment>
<comment type="similarity">
    <text evidence="2">Belongs to the GST superfamily. Zeta family.</text>
</comment>
<accession>Q9ZVQ4</accession>
<gene>
    <name type="primary">GSTZ2</name>
    <name type="ordered locus">At2g02380</name>
    <name type="ORF">T16F16.17</name>
</gene>
<evidence type="ECO:0000250" key="1"/>
<evidence type="ECO:0000305" key="2"/>
<protein>
    <recommendedName>
        <fullName>Glutathione S-transferase Z2</fullName>
        <shortName>AtGSTZ2</shortName>
        <ecNumber>2.5.1.18</ecNumber>
    </recommendedName>
    <alternativeName>
        <fullName>GST class-zeta member 2</fullName>
    </alternativeName>
</protein>
<name>GSTZ2_ARATH</name>
<proteinExistence type="inferred from homology"/>
<dbReference type="EC" id="2.5.1.18"/>
<dbReference type="EMBL" id="AC005312">
    <property type="protein sequence ID" value="AAC78520.1"/>
    <property type="molecule type" value="Genomic_DNA"/>
</dbReference>
<dbReference type="EMBL" id="CP002685">
    <property type="protein sequence ID" value="AEC05572.1"/>
    <property type="molecule type" value="Genomic_DNA"/>
</dbReference>
<dbReference type="PIR" id="A84436">
    <property type="entry name" value="A84436"/>
</dbReference>
<dbReference type="RefSeq" id="NP_178343.1">
    <property type="nucleotide sequence ID" value="NM_126295.1"/>
</dbReference>
<dbReference type="SMR" id="Q9ZVQ4"/>
<dbReference type="FunCoup" id="Q9ZVQ4">
    <property type="interactions" value="1519"/>
</dbReference>
<dbReference type="STRING" id="3702.Q9ZVQ4"/>
<dbReference type="PaxDb" id="3702-AT2G02380.1"/>
<dbReference type="EnsemblPlants" id="AT2G02380.1">
    <property type="protein sequence ID" value="AT2G02380.1"/>
    <property type="gene ID" value="AT2G02380"/>
</dbReference>
<dbReference type="GeneID" id="814769"/>
<dbReference type="Gramene" id="AT2G02380.1">
    <property type="protein sequence ID" value="AT2G02380.1"/>
    <property type="gene ID" value="AT2G02380"/>
</dbReference>
<dbReference type="KEGG" id="ath:AT2G02380"/>
<dbReference type="Araport" id="AT2G02380"/>
<dbReference type="TAIR" id="AT2G02380">
    <property type="gene designation" value="GSTZ2"/>
</dbReference>
<dbReference type="eggNOG" id="KOG0868">
    <property type="taxonomic scope" value="Eukaryota"/>
</dbReference>
<dbReference type="HOGENOM" id="CLU_011226_20_1_1"/>
<dbReference type="InParanoid" id="Q9ZVQ4"/>
<dbReference type="OMA" id="CCQRIII"/>
<dbReference type="PhylomeDB" id="Q9ZVQ4"/>
<dbReference type="BioCyc" id="ARA:AT2G02380-MONOMER"/>
<dbReference type="PRO" id="PR:Q9ZVQ4"/>
<dbReference type="Proteomes" id="UP000006548">
    <property type="component" value="Chromosome 2"/>
</dbReference>
<dbReference type="ExpressionAtlas" id="Q9ZVQ4">
    <property type="expression patterns" value="baseline and differential"/>
</dbReference>
<dbReference type="GO" id="GO:0005737">
    <property type="term" value="C:cytoplasm"/>
    <property type="evidence" value="ECO:0000303"/>
    <property type="project" value="TAIR"/>
</dbReference>
<dbReference type="GO" id="GO:0005829">
    <property type="term" value="C:cytosol"/>
    <property type="evidence" value="ECO:0007669"/>
    <property type="project" value="UniProtKB-SubCell"/>
</dbReference>
<dbReference type="GO" id="GO:0004364">
    <property type="term" value="F:glutathione transferase activity"/>
    <property type="evidence" value="ECO:0007669"/>
    <property type="project" value="UniProtKB-EC"/>
</dbReference>
<dbReference type="GO" id="GO:0009072">
    <property type="term" value="P:aromatic amino acid metabolic process"/>
    <property type="evidence" value="ECO:0007669"/>
    <property type="project" value="InterPro"/>
</dbReference>
<dbReference type="GO" id="GO:0009407">
    <property type="term" value="P:toxin catabolic process"/>
    <property type="evidence" value="ECO:0000304"/>
    <property type="project" value="TAIR"/>
</dbReference>
<dbReference type="CDD" id="cd03191">
    <property type="entry name" value="GST_C_Zeta"/>
    <property type="match status" value="1"/>
</dbReference>
<dbReference type="CDD" id="cd03042">
    <property type="entry name" value="GST_N_Zeta"/>
    <property type="match status" value="1"/>
</dbReference>
<dbReference type="FunFam" id="3.40.30.10:FF:000100">
    <property type="entry name" value="Glutathione S-transferase Z1"/>
    <property type="match status" value="1"/>
</dbReference>
<dbReference type="FunFam" id="1.20.1050.10:FF:000017">
    <property type="entry name" value="Maleylacetoacetate isomerase"/>
    <property type="match status" value="1"/>
</dbReference>
<dbReference type="Gene3D" id="1.20.1050.10">
    <property type="match status" value="1"/>
</dbReference>
<dbReference type="Gene3D" id="3.40.30.10">
    <property type="entry name" value="Glutaredoxin"/>
    <property type="match status" value="1"/>
</dbReference>
<dbReference type="InterPro" id="IPR010987">
    <property type="entry name" value="Glutathione-S-Trfase_C-like"/>
</dbReference>
<dbReference type="InterPro" id="IPR036282">
    <property type="entry name" value="Glutathione-S-Trfase_C_sf"/>
</dbReference>
<dbReference type="InterPro" id="IPR040079">
    <property type="entry name" value="Glutathione_S-Trfase"/>
</dbReference>
<dbReference type="InterPro" id="IPR004045">
    <property type="entry name" value="Glutathione_S-Trfase_N"/>
</dbReference>
<dbReference type="InterPro" id="IPR004046">
    <property type="entry name" value="GST_C"/>
</dbReference>
<dbReference type="InterPro" id="IPR005955">
    <property type="entry name" value="GST_Zeta"/>
</dbReference>
<dbReference type="InterPro" id="IPR034330">
    <property type="entry name" value="GST_Zeta_C"/>
</dbReference>
<dbReference type="InterPro" id="IPR034333">
    <property type="entry name" value="GST_Zeta_N"/>
</dbReference>
<dbReference type="InterPro" id="IPR036249">
    <property type="entry name" value="Thioredoxin-like_sf"/>
</dbReference>
<dbReference type="NCBIfam" id="TIGR01262">
    <property type="entry name" value="maiA"/>
    <property type="match status" value="1"/>
</dbReference>
<dbReference type="PANTHER" id="PTHR42673">
    <property type="entry name" value="MALEYLACETOACETATE ISOMERASE"/>
    <property type="match status" value="1"/>
</dbReference>
<dbReference type="PANTHER" id="PTHR42673:SF4">
    <property type="entry name" value="MALEYLACETOACETATE ISOMERASE"/>
    <property type="match status" value="1"/>
</dbReference>
<dbReference type="Pfam" id="PF14497">
    <property type="entry name" value="GST_C_3"/>
    <property type="match status" value="1"/>
</dbReference>
<dbReference type="Pfam" id="PF13409">
    <property type="entry name" value="GST_N_2"/>
    <property type="match status" value="1"/>
</dbReference>
<dbReference type="SFLD" id="SFLDS00019">
    <property type="entry name" value="Glutathione_Transferase_(cytos"/>
    <property type="match status" value="1"/>
</dbReference>
<dbReference type="SFLD" id="SFLDG00358">
    <property type="entry name" value="Main_(cytGST)"/>
    <property type="match status" value="1"/>
</dbReference>
<dbReference type="SUPFAM" id="SSF47616">
    <property type="entry name" value="GST C-terminal domain-like"/>
    <property type="match status" value="1"/>
</dbReference>
<dbReference type="SUPFAM" id="SSF52833">
    <property type="entry name" value="Thioredoxin-like"/>
    <property type="match status" value="1"/>
</dbReference>
<dbReference type="PROSITE" id="PS50405">
    <property type="entry name" value="GST_CTER"/>
    <property type="match status" value="1"/>
</dbReference>
<dbReference type="PROSITE" id="PS50404">
    <property type="entry name" value="GST_NTER"/>
    <property type="match status" value="1"/>
</dbReference>
<reference key="1">
    <citation type="journal article" date="1999" name="Nature">
        <title>Sequence and analysis of chromosome 2 of the plant Arabidopsis thaliana.</title>
        <authorList>
            <person name="Lin X."/>
            <person name="Kaul S."/>
            <person name="Rounsley S.D."/>
            <person name="Shea T.P."/>
            <person name="Benito M.-I."/>
            <person name="Town C.D."/>
            <person name="Fujii C.Y."/>
            <person name="Mason T.M."/>
            <person name="Bowman C.L."/>
            <person name="Barnstead M.E."/>
            <person name="Feldblyum T.V."/>
            <person name="Buell C.R."/>
            <person name="Ketchum K.A."/>
            <person name="Lee J.J."/>
            <person name="Ronning C.M."/>
            <person name="Koo H.L."/>
            <person name="Moffat K.S."/>
            <person name="Cronin L.A."/>
            <person name="Shen M."/>
            <person name="Pai G."/>
            <person name="Van Aken S."/>
            <person name="Umayam L."/>
            <person name="Tallon L.J."/>
            <person name="Gill J.E."/>
            <person name="Adams M.D."/>
            <person name="Carrera A.J."/>
            <person name="Creasy T.H."/>
            <person name="Goodman H.M."/>
            <person name="Somerville C.R."/>
            <person name="Copenhaver G.P."/>
            <person name="Preuss D."/>
            <person name="Nierman W.C."/>
            <person name="White O."/>
            <person name="Eisen J.A."/>
            <person name="Salzberg S.L."/>
            <person name="Fraser C.M."/>
            <person name="Venter J.C."/>
        </authorList>
    </citation>
    <scope>NUCLEOTIDE SEQUENCE [LARGE SCALE GENOMIC DNA]</scope>
    <source>
        <strain>cv. Columbia</strain>
    </source>
</reference>
<reference key="2">
    <citation type="journal article" date="2017" name="Plant J.">
        <title>Araport11: a complete reannotation of the Arabidopsis thaliana reference genome.</title>
        <authorList>
            <person name="Cheng C.Y."/>
            <person name="Krishnakumar V."/>
            <person name="Chan A.P."/>
            <person name="Thibaud-Nissen F."/>
            <person name="Schobel S."/>
            <person name="Town C.D."/>
        </authorList>
    </citation>
    <scope>GENOME REANNOTATION</scope>
    <source>
        <strain>cv. Columbia</strain>
    </source>
</reference>
<reference key="3">
    <citation type="journal article" date="2002" name="Plant Mol. Biol.">
        <title>Probing the diversity of the Arabidopsis glutathione S-transferase gene family.</title>
        <authorList>
            <person name="Wagner U."/>
            <person name="Edwards R."/>
            <person name="Dixon D.P."/>
            <person name="Mauch F."/>
        </authorList>
    </citation>
    <scope>GENE FAMILY</scope>
    <scope>NOMENCLATURE</scope>
</reference>
<feature type="chain" id="PRO_0000186030" description="Glutathione S-transferase Z2">
    <location>
        <begin position="1"/>
        <end position="223"/>
    </location>
</feature>
<feature type="domain" description="GST N-terminal">
    <location>
        <begin position="10"/>
        <end position="91"/>
    </location>
</feature>
<feature type="domain" description="GST C-terminal">
    <location>
        <begin position="96"/>
        <end position="221"/>
    </location>
</feature>
<feature type="binding site" evidence="1">
    <location>
        <begin position="20"/>
        <end position="25"/>
    </location>
    <ligand>
        <name>glutathione</name>
        <dbReference type="ChEBI" id="CHEBI:57925"/>
    </ligand>
</feature>
<feature type="binding site" evidence="1">
    <location>
        <begin position="20"/>
        <end position="21"/>
    </location>
    <ligand>
        <name>glutathione</name>
        <dbReference type="ChEBI" id="CHEBI:57925"/>
    </ligand>
</feature>
<feature type="binding site" evidence="1">
    <location>
        <begin position="49"/>
        <end position="50"/>
    </location>
    <ligand>
        <name>glutathione</name>
        <dbReference type="ChEBI" id="CHEBI:57925"/>
    </ligand>
</feature>
<feature type="binding site" evidence="1">
    <location>
        <position position="49"/>
    </location>
    <ligand>
        <name>glutathione</name>
        <dbReference type="ChEBI" id="CHEBI:57925"/>
    </ligand>
</feature>
<feature type="binding site" evidence="1">
    <location>
        <begin position="62"/>
        <end position="63"/>
    </location>
    <ligand>
        <name>glutathione</name>
        <dbReference type="ChEBI" id="CHEBI:57925"/>
    </ligand>
</feature>
<feature type="binding site" evidence="1">
    <location>
        <position position="63"/>
    </location>
    <ligand>
        <name>glutathione</name>
        <dbReference type="ChEBI" id="CHEBI:57925"/>
    </ligand>
</feature>
<feature type="binding site" evidence="1">
    <location>
        <begin position="75"/>
        <end position="76"/>
    </location>
    <ligand>
        <name>glutathione</name>
        <dbReference type="ChEBI" id="CHEBI:57925"/>
    </ligand>
</feature>
<feature type="binding site" evidence="1">
    <location>
        <position position="115"/>
    </location>
    <ligand>
        <name>glutathione</name>
        <dbReference type="ChEBI" id="CHEBI:57925"/>
    </ligand>
</feature>
<feature type="binding site" evidence="1">
    <location>
        <begin position="119"/>
        <end position="121"/>
    </location>
    <ligand>
        <name>glutathione</name>
        <dbReference type="ChEBI" id="CHEBI:57925"/>
    </ligand>
</feature>